<comment type="function">
    <text evidence="1">Required for rescue of stalled ribosomes mediated by trans-translation. Binds to transfer-messenger RNA (tmRNA), required for stable association of tmRNA with ribosomes. tmRNA and SmpB together mimic tRNA shape, replacing the anticodon stem-loop with SmpB. tmRNA is encoded by the ssrA gene; the 2 termini fold to resemble tRNA(Ala) and it encodes a 'tag peptide', a short internal open reading frame. During trans-translation Ala-aminoacylated tmRNA acts like a tRNA, entering the A-site of stalled ribosomes, displacing the stalled mRNA. The ribosome then switches to translate the ORF on the tmRNA; the nascent peptide is terminated with the 'tag peptide' encoded by the tmRNA and targeted for degradation. The ribosome is freed to recommence translation, which seems to be the essential function of trans-translation.</text>
</comment>
<comment type="subcellular location">
    <subcellularLocation>
        <location evidence="1">Cytoplasm</location>
    </subcellularLocation>
    <text evidence="1">The tmRNA-SmpB complex associates with stalled 70S ribosomes.</text>
</comment>
<comment type="similarity">
    <text evidence="1">Belongs to the SmpB family.</text>
</comment>
<evidence type="ECO:0000255" key="1">
    <source>
        <dbReference type="HAMAP-Rule" id="MF_00023"/>
    </source>
</evidence>
<organism>
    <name type="scientific">Salmonella heidelberg (strain SL476)</name>
    <dbReference type="NCBI Taxonomy" id="454169"/>
    <lineage>
        <taxon>Bacteria</taxon>
        <taxon>Pseudomonadati</taxon>
        <taxon>Pseudomonadota</taxon>
        <taxon>Gammaproteobacteria</taxon>
        <taxon>Enterobacterales</taxon>
        <taxon>Enterobacteriaceae</taxon>
        <taxon>Salmonella</taxon>
    </lineage>
</organism>
<feature type="chain" id="PRO_1000090182" description="SsrA-binding protein">
    <location>
        <begin position="1"/>
        <end position="160"/>
    </location>
</feature>
<accession>B4TE63</accession>
<dbReference type="EMBL" id="CP001120">
    <property type="protein sequence ID" value="ACF66372.1"/>
    <property type="molecule type" value="Genomic_DNA"/>
</dbReference>
<dbReference type="RefSeq" id="WP_001518569.1">
    <property type="nucleotide sequence ID" value="NC_011083.1"/>
</dbReference>
<dbReference type="SMR" id="B4TE63"/>
<dbReference type="GeneID" id="66757102"/>
<dbReference type="KEGG" id="seh:SeHA_C2903"/>
<dbReference type="HOGENOM" id="CLU_108953_3_0_6"/>
<dbReference type="Proteomes" id="UP000001866">
    <property type="component" value="Chromosome"/>
</dbReference>
<dbReference type="GO" id="GO:0005829">
    <property type="term" value="C:cytosol"/>
    <property type="evidence" value="ECO:0007669"/>
    <property type="project" value="TreeGrafter"/>
</dbReference>
<dbReference type="GO" id="GO:0003723">
    <property type="term" value="F:RNA binding"/>
    <property type="evidence" value="ECO:0007669"/>
    <property type="project" value="UniProtKB-UniRule"/>
</dbReference>
<dbReference type="GO" id="GO:0070929">
    <property type="term" value="P:trans-translation"/>
    <property type="evidence" value="ECO:0007669"/>
    <property type="project" value="UniProtKB-UniRule"/>
</dbReference>
<dbReference type="CDD" id="cd09294">
    <property type="entry name" value="SmpB"/>
    <property type="match status" value="1"/>
</dbReference>
<dbReference type="FunFam" id="2.40.280.10:FF:000001">
    <property type="entry name" value="SsrA-binding protein"/>
    <property type="match status" value="1"/>
</dbReference>
<dbReference type="Gene3D" id="2.40.280.10">
    <property type="match status" value="1"/>
</dbReference>
<dbReference type="HAMAP" id="MF_00023">
    <property type="entry name" value="SmpB"/>
    <property type="match status" value="1"/>
</dbReference>
<dbReference type="InterPro" id="IPR023620">
    <property type="entry name" value="SmpB"/>
</dbReference>
<dbReference type="InterPro" id="IPR000037">
    <property type="entry name" value="SsrA-bd_prot"/>
</dbReference>
<dbReference type="InterPro" id="IPR020081">
    <property type="entry name" value="SsrA-bd_prot_CS"/>
</dbReference>
<dbReference type="NCBIfam" id="NF003843">
    <property type="entry name" value="PRK05422.1"/>
    <property type="match status" value="1"/>
</dbReference>
<dbReference type="NCBIfam" id="TIGR00086">
    <property type="entry name" value="smpB"/>
    <property type="match status" value="1"/>
</dbReference>
<dbReference type="PANTHER" id="PTHR30308:SF2">
    <property type="entry name" value="SSRA-BINDING PROTEIN"/>
    <property type="match status" value="1"/>
</dbReference>
<dbReference type="PANTHER" id="PTHR30308">
    <property type="entry name" value="TMRNA-BINDING COMPONENT OF TRANS-TRANSLATION TAGGING COMPLEX"/>
    <property type="match status" value="1"/>
</dbReference>
<dbReference type="Pfam" id="PF01668">
    <property type="entry name" value="SmpB"/>
    <property type="match status" value="1"/>
</dbReference>
<dbReference type="SUPFAM" id="SSF74982">
    <property type="entry name" value="Small protein B (SmpB)"/>
    <property type="match status" value="1"/>
</dbReference>
<dbReference type="PROSITE" id="PS01317">
    <property type="entry name" value="SSRP"/>
    <property type="match status" value="1"/>
</dbReference>
<protein>
    <recommendedName>
        <fullName evidence="1">SsrA-binding protein</fullName>
    </recommendedName>
    <alternativeName>
        <fullName evidence="1">Small protein B</fullName>
    </alternativeName>
</protein>
<keyword id="KW-0963">Cytoplasm</keyword>
<keyword id="KW-0694">RNA-binding</keyword>
<proteinExistence type="inferred from homology"/>
<reference key="1">
    <citation type="journal article" date="2011" name="J. Bacteriol.">
        <title>Comparative genomics of 28 Salmonella enterica isolates: evidence for CRISPR-mediated adaptive sublineage evolution.</title>
        <authorList>
            <person name="Fricke W.F."/>
            <person name="Mammel M.K."/>
            <person name="McDermott P.F."/>
            <person name="Tartera C."/>
            <person name="White D.G."/>
            <person name="Leclerc J.E."/>
            <person name="Ravel J."/>
            <person name="Cebula T.A."/>
        </authorList>
    </citation>
    <scope>NUCLEOTIDE SEQUENCE [LARGE SCALE GENOMIC DNA]</scope>
    <source>
        <strain>SL476</strain>
    </source>
</reference>
<sequence length="160" mass="18232">MTKKKAHKPGSATIALNKRARHEYFIEEEFEAGLALQGWEVKSLRAGKANIGDSYVILKDGEAWLFGANFTPMAVASTHVVCDPTRTRKLLLNQRELDSLYGRINREGYTVVALSLYWKNAWCKVKIGVAKGKKQHDKRSDLKEREWQLDKARIMKNAGR</sequence>
<gene>
    <name evidence="1" type="primary">smpB</name>
    <name type="ordered locus">SeHA_C2903</name>
</gene>
<name>SSRP_SALHS</name>